<proteinExistence type="inferred from homology"/>
<sequence>MSQEAILEKVRSIVAEQLSVDAGEVKPESNFQNDLGADSLDTVELVMALEEAFDIEIPDESAEGILTVGDAVKYIEDKQA</sequence>
<gene>
    <name evidence="1" type="primary">acpP</name>
    <name type="ordered locus">Syncc9902_0170</name>
</gene>
<dbReference type="EMBL" id="CP000097">
    <property type="protein sequence ID" value="ABB25145.1"/>
    <property type="molecule type" value="Genomic_DNA"/>
</dbReference>
<dbReference type="RefSeq" id="WP_009788395.1">
    <property type="nucleotide sequence ID" value="NC_007513.1"/>
</dbReference>
<dbReference type="SMR" id="Q3B0I3"/>
<dbReference type="STRING" id="316279.Syncc9902_0170"/>
<dbReference type="KEGG" id="sye:Syncc9902_0170"/>
<dbReference type="eggNOG" id="COG0236">
    <property type="taxonomic scope" value="Bacteria"/>
</dbReference>
<dbReference type="HOGENOM" id="CLU_108696_5_1_3"/>
<dbReference type="OrthoDB" id="9804551at2"/>
<dbReference type="UniPathway" id="UPA00094"/>
<dbReference type="Proteomes" id="UP000002712">
    <property type="component" value="Chromosome"/>
</dbReference>
<dbReference type="GO" id="GO:0005829">
    <property type="term" value="C:cytosol"/>
    <property type="evidence" value="ECO:0007669"/>
    <property type="project" value="TreeGrafter"/>
</dbReference>
<dbReference type="GO" id="GO:0016020">
    <property type="term" value="C:membrane"/>
    <property type="evidence" value="ECO:0007669"/>
    <property type="project" value="GOC"/>
</dbReference>
<dbReference type="GO" id="GO:0000035">
    <property type="term" value="F:acyl binding"/>
    <property type="evidence" value="ECO:0007669"/>
    <property type="project" value="TreeGrafter"/>
</dbReference>
<dbReference type="GO" id="GO:0000036">
    <property type="term" value="F:acyl carrier activity"/>
    <property type="evidence" value="ECO:0007669"/>
    <property type="project" value="UniProtKB-UniRule"/>
</dbReference>
<dbReference type="GO" id="GO:0009245">
    <property type="term" value="P:lipid A biosynthetic process"/>
    <property type="evidence" value="ECO:0007669"/>
    <property type="project" value="TreeGrafter"/>
</dbReference>
<dbReference type="FunFam" id="1.10.1200.10:FF:000006">
    <property type="entry name" value="Acyl carrier protein"/>
    <property type="match status" value="1"/>
</dbReference>
<dbReference type="Gene3D" id="1.10.1200.10">
    <property type="entry name" value="ACP-like"/>
    <property type="match status" value="1"/>
</dbReference>
<dbReference type="HAMAP" id="MF_01217">
    <property type="entry name" value="Acyl_carrier"/>
    <property type="match status" value="1"/>
</dbReference>
<dbReference type="InterPro" id="IPR003231">
    <property type="entry name" value="ACP"/>
</dbReference>
<dbReference type="InterPro" id="IPR036736">
    <property type="entry name" value="ACP-like_sf"/>
</dbReference>
<dbReference type="InterPro" id="IPR009081">
    <property type="entry name" value="PP-bd_ACP"/>
</dbReference>
<dbReference type="InterPro" id="IPR006162">
    <property type="entry name" value="Ppantetheine_attach_site"/>
</dbReference>
<dbReference type="NCBIfam" id="TIGR00517">
    <property type="entry name" value="acyl_carrier"/>
    <property type="match status" value="1"/>
</dbReference>
<dbReference type="NCBIfam" id="NF002148">
    <property type="entry name" value="PRK00982.1-2"/>
    <property type="match status" value="1"/>
</dbReference>
<dbReference type="NCBIfam" id="NF002149">
    <property type="entry name" value="PRK00982.1-3"/>
    <property type="match status" value="1"/>
</dbReference>
<dbReference type="NCBIfam" id="NF002150">
    <property type="entry name" value="PRK00982.1-4"/>
    <property type="match status" value="1"/>
</dbReference>
<dbReference type="NCBIfam" id="NF002151">
    <property type="entry name" value="PRK00982.1-5"/>
    <property type="match status" value="1"/>
</dbReference>
<dbReference type="PANTHER" id="PTHR20863">
    <property type="entry name" value="ACYL CARRIER PROTEIN"/>
    <property type="match status" value="1"/>
</dbReference>
<dbReference type="PANTHER" id="PTHR20863:SF76">
    <property type="entry name" value="CARRIER DOMAIN-CONTAINING PROTEIN"/>
    <property type="match status" value="1"/>
</dbReference>
<dbReference type="Pfam" id="PF00550">
    <property type="entry name" value="PP-binding"/>
    <property type="match status" value="1"/>
</dbReference>
<dbReference type="SUPFAM" id="SSF47336">
    <property type="entry name" value="ACP-like"/>
    <property type="match status" value="1"/>
</dbReference>
<dbReference type="PROSITE" id="PS50075">
    <property type="entry name" value="CARRIER"/>
    <property type="match status" value="1"/>
</dbReference>
<dbReference type="PROSITE" id="PS00012">
    <property type="entry name" value="PHOSPHOPANTETHEINE"/>
    <property type="match status" value="1"/>
</dbReference>
<protein>
    <recommendedName>
        <fullName evidence="1">Acyl carrier protein</fullName>
        <shortName evidence="1">ACP</shortName>
    </recommendedName>
</protein>
<keyword id="KW-0963">Cytoplasm</keyword>
<keyword id="KW-0275">Fatty acid biosynthesis</keyword>
<keyword id="KW-0276">Fatty acid metabolism</keyword>
<keyword id="KW-0444">Lipid biosynthesis</keyword>
<keyword id="KW-0443">Lipid metabolism</keyword>
<keyword id="KW-0596">Phosphopantetheine</keyword>
<keyword id="KW-0597">Phosphoprotein</keyword>
<keyword id="KW-1185">Reference proteome</keyword>
<comment type="function">
    <text evidence="1">Carrier of the growing fatty acid chain in fatty acid biosynthesis.</text>
</comment>
<comment type="pathway">
    <text evidence="1">Lipid metabolism; fatty acid biosynthesis.</text>
</comment>
<comment type="subcellular location">
    <subcellularLocation>
        <location evidence="1">Cytoplasm</location>
    </subcellularLocation>
</comment>
<comment type="PTM">
    <text evidence="1">4'-phosphopantetheine is transferred from CoA to a specific serine of apo-ACP by AcpS. This modification is essential for activity because fatty acids are bound in thioester linkage to the sulfhydryl of the prosthetic group.</text>
</comment>
<comment type="similarity">
    <text evidence="1">Belongs to the acyl carrier protein (ACP) family.</text>
</comment>
<feature type="chain" id="PRO_1000066710" description="Acyl carrier protein">
    <location>
        <begin position="1"/>
        <end position="80"/>
    </location>
</feature>
<feature type="domain" description="Carrier" evidence="2">
    <location>
        <begin position="4"/>
        <end position="79"/>
    </location>
</feature>
<feature type="modified residue" description="O-(pantetheine 4'-phosphoryl)serine" evidence="2">
    <location>
        <position position="39"/>
    </location>
</feature>
<organism>
    <name type="scientific">Synechococcus sp. (strain CC9902)</name>
    <dbReference type="NCBI Taxonomy" id="316279"/>
    <lineage>
        <taxon>Bacteria</taxon>
        <taxon>Bacillati</taxon>
        <taxon>Cyanobacteriota</taxon>
        <taxon>Cyanophyceae</taxon>
        <taxon>Synechococcales</taxon>
        <taxon>Synechococcaceae</taxon>
        <taxon>Synechococcus</taxon>
    </lineage>
</organism>
<name>ACP_SYNS9</name>
<evidence type="ECO:0000255" key="1">
    <source>
        <dbReference type="HAMAP-Rule" id="MF_01217"/>
    </source>
</evidence>
<evidence type="ECO:0000255" key="2">
    <source>
        <dbReference type="PROSITE-ProRule" id="PRU00258"/>
    </source>
</evidence>
<reference key="1">
    <citation type="submission" date="2005-08" db="EMBL/GenBank/DDBJ databases">
        <title>Complete sequence of Synechococcus sp. CC9902.</title>
        <authorList>
            <person name="Copeland A."/>
            <person name="Lucas S."/>
            <person name="Lapidus A."/>
            <person name="Barry K."/>
            <person name="Detter J.C."/>
            <person name="Glavina T."/>
            <person name="Hammon N."/>
            <person name="Israni S."/>
            <person name="Pitluck S."/>
            <person name="Martinez M."/>
            <person name="Schmutz J."/>
            <person name="Larimer F."/>
            <person name="Land M."/>
            <person name="Kyrpides N."/>
            <person name="Ivanova N."/>
            <person name="Richardson P."/>
        </authorList>
    </citation>
    <scope>NUCLEOTIDE SEQUENCE [LARGE SCALE GENOMIC DNA]</scope>
    <source>
        <strain>CC9902</strain>
    </source>
</reference>
<accession>Q3B0I3</accession>